<name>CHAB_ECOLI</name>
<feature type="chain" id="PRO_0000089632" description="Putative cation transport regulator ChaB">
    <location>
        <begin position="1"/>
        <end position="76"/>
    </location>
</feature>
<evidence type="ECO:0000250" key="1">
    <source>
        <dbReference type="UniProtKB" id="P0AE65"/>
    </source>
</evidence>
<evidence type="ECO:0000305" key="2"/>
<accession>P0AE63</accession>
<accession>P39162</accession>
<proteinExistence type="inferred from homology"/>
<dbReference type="EMBL" id="L28709">
    <property type="protein sequence ID" value="AAA20199.1"/>
    <property type="molecule type" value="Genomic_DNA"/>
</dbReference>
<dbReference type="EMBL" id="U00096">
    <property type="protein sequence ID" value="AAC74301.1"/>
    <property type="molecule type" value="Genomic_DNA"/>
</dbReference>
<dbReference type="EMBL" id="AP009048">
    <property type="protein sequence ID" value="BAA36075.1"/>
    <property type="molecule type" value="Genomic_DNA"/>
</dbReference>
<dbReference type="PIR" id="F64868">
    <property type="entry name" value="F64868"/>
</dbReference>
<dbReference type="RefSeq" id="NP_415735.1">
    <property type="nucleotide sequence ID" value="NC_000913.3"/>
</dbReference>
<dbReference type="RefSeq" id="WP_001146444.1">
    <property type="nucleotide sequence ID" value="NZ_SSZK01000010.1"/>
</dbReference>
<dbReference type="BMRB" id="P0AE63"/>
<dbReference type="SMR" id="P0AE63"/>
<dbReference type="BioGRID" id="4260111">
    <property type="interactions" value="21"/>
</dbReference>
<dbReference type="DIP" id="DIP-47930N"/>
<dbReference type="FunCoup" id="P0AE63">
    <property type="interactions" value="68"/>
</dbReference>
<dbReference type="IntAct" id="P0AE63">
    <property type="interactions" value="2"/>
</dbReference>
<dbReference type="STRING" id="511145.b1217"/>
<dbReference type="jPOST" id="P0AE63"/>
<dbReference type="PaxDb" id="511145-b1217"/>
<dbReference type="EnsemblBacteria" id="AAC74301">
    <property type="protein sequence ID" value="AAC74301"/>
    <property type="gene ID" value="b1217"/>
</dbReference>
<dbReference type="GeneID" id="93775285"/>
<dbReference type="GeneID" id="945792"/>
<dbReference type="KEGG" id="ecj:JW1208"/>
<dbReference type="KEGG" id="eco:b1217"/>
<dbReference type="KEGG" id="ecoc:C3026_07160"/>
<dbReference type="PATRIC" id="fig|1411691.4.peg.1065"/>
<dbReference type="EchoBASE" id="EB2302"/>
<dbReference type="eggNOG" id="COG4572">
    <property type="taxonomic scope" value="Bacteria"/>
</dbReference>
<dbReference type="HOGENOM" id="CLU_179907_0_0_6"/>
<dbReference type="InParanoid" id="P0AE63"/>
<dbReference type="OMA" id="KAFNSAW"/>
<dbReference type="OrthoDB" id="73307at2"/>
<dbReference type="PhylomeDB" id="P0AE63"/>
<dbReference type="BioCyc" id="EcoCyc:EG12402-MONOMER"/>
<dbReference type="PRO" id="PR:P0AE63"/>
<dbReference type="Proteomes" id="UP000000625">
    <property type="component" value="Chromosome"/>
</dbReference>
<dbReference type="Gene3D" id="1.10.1740.70">
    <property type="entry name" value="ChaB"/>
    <property type="match status" value="1"/>
</dbReference>
<dbReference type="InterPro" id="IPR009317">
    <property type="entry name" value="ChaB"/>
</dbReference>
<dbReference type="InterPro" id="IPR037205">
    <property type="entry name" value="ChaB_sf"/>
</dbReference>
<dbReference type="NCBIfam" id="NF007136">
    <property type="entry name" value="PRK09582.1"/>
    <property type="match status" value="1"/>
</dbReference>
<dbReference type="Pfam" id="PF06150">
    <property type="entry name" value="ChaB"/>
    <property type="match status" value="1"/>
</dbReference>
<dbReference type="SUPFAM" id="SSF140376">
    <property type="entry name" value="ChaB-like"/>
    <property type="match status" value="1"/>
</dbReference>
<organism>
    <name type="scientific">Escherichia coli (strain K12)</name>
    <dbReference type="NCBI Taxonomy" id="83333"/>
    <lineage>
        <taxon>Bacteria</taxon>
        <taxon>Pseudomonadati</taxon>
        <taxon>Pseudomonadota</taxon>
        <taxon>Gammaproteobacteria</taxon>
        <taxon>Enterobacterales</taxon>
        <taxon>Enterobacteriaceae</taxon>
        <taxon>Escherichia</taxon>
    </lineage>
</organism>
<comment type="function">
    <text evidence="1">Might be a regulator of the sodium-potassium/proton antiporter ChaA.</text>
</comment>
<comment type="subunit">
    <text evidence="1">Monomer.</text>
</comment>
<comment type="similarity">
    <text evidence="2">Belongs to the ChaB family.</text>
</comment>
<reference key="1">
    <citation type="submission" date="1994-07" db="EMBL/GenBank/DDBJ databases">
        <authorList>
            <person name="Ivey D.M."/>
            <person name="Guffanti A.A."/>
            <person name="Zemsky J."/>
            <person name="Pinner E."/>
            <person name="Karpel R."/>
            <person name="Padan E."/>
            <person name="Schuldiner S."/>
            <person name="Krulwich T.A."/>
        </authorList>
    </citation>
    <scope>NUCLEOTIDE SEQUENCE [GENOMIC DNA]</scope>
    <source>
        <strain>NM8191</strain>
    </source>
</reference>
<reference key="2">
    <citation type="journal article" date="1996" name="DNA Res.">
        <title>A 718-kb DNA sequence of the Escherichia coli K-12 genome corresponding to the 12.7-28.0 min region on the linkage map.</title>
        <authorList>
            <person name="Oshima T."/>
            <person name="Aiba H."/>
            <person name="Baba T."/>
            <person name="Fujita K."/>
            <person name="Hayashi K."/>
            <person name="Honjo A."/>
            <person name="Ikemoto K."/>
            <person name="Inada T."/>
            <person name="Itoh T."/>
            <person name="Kajihara M."/>
            <person name="Kanai K."/>
            <person name="Kashimoto K."/>
            <person name="Kimura S."/>
            <person name="Kitagawa M."/>
            <person name="Makino K."/>
            <person name="Masuda S."/>
            <person name="Miki T."/>
            <person name="Mizobuchi K."/>
            <person name="Mori H."/>
            <person name="Motomura K."/>
            <person name="Nakamura Y."/>
            <person name="Nashimoto H."/>
            <person name="Nishio Y."/>
            <person name="Saito N."/>
            <person name="Sampei G."/>
            <person name="Seki Y."/>
            <person name="Tagami H."/>
            <person name="Takemoto K."/>
            <person name="Wada C."/>
            <person name="Yamamoto Y."/>
            <person name="Yano M."/>
            <person name="Horiuchi T."/>
        </authorList>
    </citation>
    <scope>NUCLEOTIDE SEQUENCE [LARGE SCALE GENOMIC DNA]</scope>
    <source>
        <strain>K12 / W3110 / ATCC 27325 / DSM 5911</strain>
    </source>
</reference>
<reference key="3">
    <citation type="journal article" date="1997" name="Science">
        <title>The complete genome sequence of Escherichia coli K-12.</title>
        <authorList>
            <person name="Blattner F.R."/>
            <person name="Plunkett G. III"/>
            <person name="Bloch C.A."/>
            <person name="Perna N.T."/>
            <person name="Burland V."/>
            <person name="Riley M."/>
            <person name="Collado-Vides J."/>
            <person name="Glasner J.D."/>
            <person name="Rode C.K."/>
            <person name="Mayhew G.F."/>
            <person name="Gregor J."/>
            <person name="Davis N.W."/>
            <person name="Kirkpatrick H.A."/>
            <person name="Goeden M.A."/>
            <person name="Rose D.J."/>
            <person name="Mau B."/>
            <person name="Shao Y."/>
        </authorList>
    </citation>
    <scope>NUCLEOTIDE SEQUENCE [LARGE SCALE GENOMIC DNA]</scope>
    <source>
        <strain>K12 / MG1655 / ATCC 47076</strain>
    </source>
</reference>
<reference key="4">
    <citation type="journal article" date="2006" name="Mol. Syst. Biol.">
        <title>Highly accurate genome sequences of Escherichia coli K-12 strains MG1655 and W3110.</title>
        <authorList>
            <person name="Hayashi K."/>
            <person name="Morooka N."/>
            <person name="Yamamoto Y."/>
            <person name="Fujita K."/>
            <person name="Isono K."/>
            <person name="Choi S."/>
            <person name="Ohtsubo E."/>
            <person name="Baba T."/>
            <person name="Wanner B.L."/>
            <person name="Mori H."/>
            <person name="Horiuchi T."/>
        </authorList>
    </citation>
    <scope>NUCLEOTIDE SEQUENCE [LARGE SCALE GENOMIC DNA]</scope>
    <source>
        <strain>K12 / W3110 / ATCC 27325 / DSM 5911</strain>
    </source>
</reference>
<keyword id="KW-1185">Reference proteome</keyword>
<keyword id="KW-0804">Transcription</keyword>
<keyword id="KW-0805">Transcription regulation</keyword>
<gene>
    <name type="primary">chaB</name>
    <name type="ordered locus">b1217</name>
    <name type="ordered locus">JW1208</name>
</gene>
<sequence>MPYKTKSDLPESVKHVLPSHAQDIYKEAFNSAWDQYKDKEDRRDDASREETAHKVAWAAVKHEYAKGDDDKWHKKS</sequence>
<protein>
    <recommendedName>
        <fullName>Putative cation transport regulator ChaB</fullName>
    </recommendedName>
</protein>